<protein>
    <recommendedName>
        <fullName>Anaphase-promoting complex subunit SWM1</fullName>
    </recommendedName>
    <alternativeName>
        <fullName>Anaphase-promoting complex subunit 13</fullName>
    </alternativeName>
    <alternativeName>
        <fullName>Spore wall maturation protein 1</fullName>
    </alternativeName>
</protein>
<sequence>MSSSSYRDSYFQYRHLPAPHHILYAEWNQDILALPDEVANITMAMKDNTRTDAEEGRAPQDGERNSNVRESAQGKALMTSEQNSNRYWNSFHDEDDWNLFNGMELESNGVVTFAGQAFDHSLNGGTNSRNDGANEPRKETITGSIFDRRITQLAYARNNGWHELALPQSR</sequence>
<keyword id="KW-0002">3D-structure</keyword>
<keyword id="KW-0131">Cell cycle</keyword>
<keyword id="KW-0132">Cell division</keyword>
<keyword id="KW-0469">Meiosis</keyword>
<keyword id="KW-0498">Mitosis</keyword>
<keyword id="KW-1185">Reference proteome</keyword>
<keyword id="KW-0833">Ubl conjugation pathway</keyword>
<proteinExistence type="evidence at protein level"/>
<accession>Q12379</accession>
<accession>D6VSP0</accession>
<evidence type="ECO:0000256" key="1">
    <source>
        <dbReference type="SAM" id="MobiDB-lite"/>
    </source>
</evidence>
<evidence type="ECO:0000269" key="2">
    <source>
    </source>
</evidence>
<evidence type="ECO:0000269" key="3">
    <source>
    </source>
</evidence>
<evidence type="ECO:0000269" key="4">
    <source>
    </source>
</evidence>
<evidence type="ECO:0000305" key="5"/>
<evidence type="ECO:0007829" key="6">
    <source>
        <dbReference type="PDB" id="8A3T"/>
    </source>
</evidence>
<name>SWM1_YEAST</name>
<dbReference type="EMBL" id="Z70202">
    <property type="protein sequence ID" value="CAA94099.1"/>
    <property type="molecule type" value="Genomic_DNA"/>
</dbReference>
<dbReference type="EMBL" id="Z68329">
    <property type="protein sequence ID" value="CAA92718.1"/>
    <property type="molecule type" value="Genomic_DNA"/>
</dbReference>
<dbReference type="EMBL" id="AY557727">
    <property type="protein sequence ID" value="AAS56053.1"/>
    <property type="molecule type" value="Genomic_DNA"/>
</dbReference>
<dbReference type="EMBL" id="BK006938">
    <property type="protein sequence ID" value="DAA12100.1"/>
    <property type="molecule type" value="Genomic_DNA"/>
</dbReference>
<dbReference type="PIR" id="S67318">
    <property type="entry name" value="S67318"/>
</dbReference>
<dbReference type="RefSeq" id="NP_010546.1">
    <property type="nucleotide sequence ID" value="NM_001180568.1"/>
</dbReference>
<dbReference type="PDB" id="8A3T">
    <property type="method" value="EM"/>
    <property type="resolution" value="3.50 A"/>
    <property type="chains" value="I=1-170"/>
</dbReference>
<dbReference type="PDB" id="8A5Y">
    <property type="method" value="EM"/>
    <property type="resolution" value="4.90 A"/>
    <property type="chains" value="I=1-170"/>
</dbReference>
<dbReference type="PDB" id="8A61">
    <property type="method" value="EM"/>
    <property type="resolution" value="5.40 A"/>
    <property type="chains" value="I=1-170"/>
</dbReference>
<dbReference type="PDBsum" id="8A3T"/>
<dbReference type="PDBsum" id="8A5Y"/>
<dbReference type="PDBsum" id="8A61"/>
<dbReference type="EMDB" id="EMD-15123"/>
<dbReference type="EMDB" id="EMD-15199"/>
<dbReference type="EMDB" id="EMD-15201"/>
<dbReference type="SMR" id="Q12379"/>
<dbReference type="BioGRID" id="32310">
    <property type="interactions" value="167"/>
</dbReference>
<dbReference type="ComplexPortal" id="CPX-756">
    <property type="entry name" value="Anaphase-Promoting core complex"/>
</dbReference>
<dbReference type="ComplexPortal" id="CPX-760">
    <property type="entry name" value="Anaphase-Promoting Complex, CDC20 variant"/>
</dbReference>
<dbReference type="ComplexPortal" id="CPX-761">
    <property type="entry name" value="Anaphase-Promoting Complex, CDH1 variant"/>
</dbReference>
<dbReference type="ComplexPortal" id="CPX-762">
    <property type="entry name" value="Anaphase-Promoting complex AMA1 variant"/>
</dbReference>
<dbReference type="DIP" id="DIP-4818N"/>
<dbReference type="FunCoup" id="Q12379">
    <property type="interactions" value="299"/>
</dbReference>
<dbReference type="IntAct" id="Q12379">
    <property type="interactions" value="32"/>
</dbReference>
<dbReference type="STRING" id="4932.YDR260C"/>
<dbReference type="iPTMnet" id="Q12379"/>
<dbReference type="PaxDb" id="4932-YDR260C"/>
<dbReference type="PeptideAtlas" id="Q12379"/>
<dbReference type="EnsemblFungi" id="YDR260C_mRNA">
    <property type="protein sequence ID" value="YDR260C"/>
    <property type="gene ID" value="YDR260C"/>
</dbReference>
<dbReference type="GeneID" id="851847"/>
<dbReference type="KEGG" id="sce:YDR260C"/>
<dbReference type="AGR" id="SGD:S000002668"/>
<dbReference type="SGD" id="S000002668">
    <property type="gene designation" value="SWM1"/>
</dbReference>
<dbReference type="VEuPathDB" id="FungiDB:YDR260C"/>
<dbReference type="eggNOG" id="ENOG502S9HM">
    <property type="taxonomic scope" value="Eukaryota"/>
</dbReference>
<dbReference type="HOGENOM" id="CLU_150173_0_0_1"/>
<dbReference type="InParanoid" id="Q12379"/>
<dbReference type="OMA" id="YNEWNED"/>
<dbReference type="OrthoDB" id="4038621at2759"/>
<dbReference type="BioCyc" id="YEAST:G3O-29831-MONOMER"/>
<dbReference type="UniPathway" id="UPA00143"/>
<dbReference type="BioGRID-ORCS" id="851847">
    <property type="hits" value="0 hits in 10 CRISPR screens"/>
</dbReference>
<dbReference type="PRO" id="PR:Q12379"/>
<dbReference type="Proteomes" id="UP000002311">
    <property type="component" value="Chromosome IV"/>
</dbReference>
<dbReference type="RNAct" id="Q12379">
    <property type="molecule type" value="protein"/>
</dbReference>
<dbReference type="GO" id="GO:0005680">
    <property type="term" value="C:anaphase-promoting complex"/>
    <property type="evidence" value="ECO:0000314"/>
    <property type="project" value="SGD"/>
</dbReference>
<dbReference type="GO" id="GO:0005634">
    <property type="term" value="C:nucleus"/>
    <property type="evidence" value="ECO:0000314"/>
    <property type="project" value="SGD"/>
</dbReference>
<dbReference type="GO" id="GO:1904824">
    <property type="term" value="P:anaphase-promoting complex assembly"/>
    <property type="evidence" value="ECO:0000315"/>
    <property type="project" value="SGD"/>
</dbReference>
<dbReference type="GO" id="GO:0031145">
    <property type="term" value="P:anaphase-promoting complex-dependent catabolic process"/>
    <property type="evidence" value="ECO:0000314"/>
    <property type="project" value="ComplexPortal"/>
</dbReference>
<dbReference type="GO" id="GO:0030476">
    <property type="term" value="P:ascospore wall assembly"/>
    <property type="evidence" value="ECO:0000315"/>
    <property type="project" value="SGD"/>
</dbReference>
<dbReference type="GO" id="GO:0051301">
    <property type="term" value="P:cell division"/>
    <property type="evidence" value="ECO:0007669"/>
    <property type="project" value="UniProtKB-KW"/>
</dbReference>
<dbReference type="GO" id="GO:0016567">
    <property type="term" value="P:protein ubiquitination"/>
    <property type="evidence" value="ECO:0000314"/>
    <property type="project" value="ComplexPortal"/>
</dbReference>
<dbReference type="GO" id="GO:0051445">
    <property type="term" value="P:regulation of meiotic cell cycle"/>
    <property type="evidence" value="ECO:0000303"/>
    <property type="project" value="ComplexPortal"/>
</dbReference>
<dbReference type="GO" id="GO:0007346">
    <property type="term" value="P:regulation of mitotic cell cycle"/>
    <property type="evidence" value="ECO:0000303"/>
    <property type="project" value="ComplexPortal"/>
</dbReference>
<dbReference type="GO" id="GO:0030071">
    <property type="term" value="P:regulation of mitotic metaphase/anaphase transition"/>
    <property type="evidence" value="ECO:0000315"/>
    <property type="project" value="SGD"/>
</dbReference>
<dbReference type="InterPro" id="IPR008401">
    <property type="entry name" value="Apc13"/>
</dbReference>
<dbReference type="Pfam" id="PF05839">
    <property type="entry name" value="Apc13p"/>
    <property type="match status" value="1"/>
</dbReference>
<organism>
    <name type="scientific">Saccharomyces cerevisiae (strain ATCC 204508 / S288c)</name>
    <name type="common">Baker's yeast</name>
    <dbReference type="NCBI Taxonomy" id="559292"/>
    <lineage>
        <taxon>Eukaryota</taxon>
        <taxon>Fungi</taxon>
        <taxon>Dikarya</taxon>
        <taxon>Ascomycota</taxon>
        <taxon>Saccharomycotina</taxon>
        <taxon>Saccharomycetes</taxon>
        <taxon>Saccharomycetales</taxon>
        <taxon>Saccharomycetaceae</taxon>
        <taxon>Saccharomyces</taxon>
    </lineage>
</organism>
<gene>
    <name type="primary">SWM1</name>
    <name type="synonym">APC13</name>
    <name type="ordered locus">YDR260C</name>
    <name type="ORF">YD9320A.11</name>
    <name type="ORF">YD9320A.11c</name>
</gene>
<reference key="1">
    <citation type="journal article" date="1997" name="Nature">
        <title>The nucleotide sequence of Saccharomyces cerevisiae chromosome IV.</title>
        <authorList>
            <person name="Jacq C."/>
            <person name="Alt-Moerbe J."/>
            <person name="Andre B."/>
            <person name="Arnold W."/>
            <person name="Bahr A."/>
            <person name="Ballesta J.P.G."/>
            <person name="Bargues M."/>
            <person name="Baron L."/>
            <person name="Becker A."/>
            <person name="Biteau N."/>
            <person name="Bloecker H."/>
            <person name="Blugeon C."/>
            <person name="Boskovic J."/>
            <person name="Brandt P."/>
            <person name="Brueckner M."/>
            <person name="Buitrago M.J."/>
            <person name="Coster F."/>
            <person name="Delaveau T."/>
            <person name="del Rey F."/>
            <person name="Dujon B."/>
            <person name="Eide L.G."/>
            <person name="Garcia-Cantalejo J.M."/>
            <person name="Goffeau A."/>
            <person name="Gomez-Peris A."/>
            <person name="Granotier C."/>
            <person name="Hanemann V."/>
            <person name="Hankeln T."/>
            <person name="Hoheisel J.D."/>
            <person name="Jaeger W."/>
            <person name="Jimenez A."/>
            <person name="Jonniaux J.-L."/>
            <person name="Kraemer C."/>
            <person name="Kuester H."/>
            <person name="Laamanen P."/>
            <person name="Legros Y."/>
            <person name="Louis E.J."/>
            <person name="Moeller-Rieker S."/>
            <person name="Monnet A."/>
            <person name="Moro M."/>
            <person name="Mueller-Auer S."/>
            <person name="Nussbaumer B."/>
            <person name="Paricio N."/>
            <person name="Paulin L."/>
            <person name="Perea J."/>
            <person name="Perez-Alonso M."/>
            <person name="Perez-Ortin J.E."/>
            <person name="Pohl T.M."/>
            <person name="Prydz H."/>
            <person name="Purnelle B."/>
            <person name="Rasmussen S.W."/>
            <person name="Remacha M.A."/>
            <person name="Revuelta J.L."/>
            <person name="Rieger M."/>
            <person name="Salom D."/>
            <person name="Saluz H.P."/>
            <person name="Saiz J.E."/>
            <person name="Saren A.-M."/>
            <person name="Schaefer M."/>
            <person name="Scharfe M."/>
            <person name="Schmidt E.R."/>
            <person name="Schneider C."/>
            <person name="Scholler P."/>
            <person name="Schwarz S."/>
            <person name="Soler-Mira A."/>
            <person name="Urrestarazu L.A."/>
            <person name="Verhasselt P."/>
            <person name="Vissers S."/>
            <person name="Voet M."/>
            <person name="Volckaert G."/>
            <person name="Wagner G."/>
            <person name="Wambutt R."/>
            <person name="Wedler E."/>
            <person name="Wedler H."/>
            <person name="Woelfl S."/>
            <person name="Harris D.E."/>
            <person name="Bowman S."/>
            <person name="Brown D."/>
            <person name="Churcher C.M."/>
            <person name="Connor R."/>
            <person name="Dedman K."/>
            <person name="Gentles S."/>
            <person name="Hamlin N."/>
            <person name="Hunt S."/>
            <person name="Jones L."/>
            <person name="McDonald S."/>
            <person name="Murphy L.D."/>
            <person name="Niblett D."/>
            <person name="Odell C."/>
            <person name="Oliver K."/>
            <person name="Rajandream M.A."/>
            <person name="Richards C."/>
            <person name="Shore L."/>
            <person name="Walsh S.V."/>
            <person name="Barrell B.G."/>
            <person name="Dietrich F.S."/>
            <person name="Mulligan J.T."/>
            <person name="Allen E."/>
            <person name="Araujo R."/>
            <person name="Aviles E."/>
            <person name="Berno A."/>
            <person name="Carpenter J."/>
            <person name="Chen E."/>
            <person name="Cherry J.M."/>
            <person name="Chung E."/>
            <person name="Duncan M."/>
            <person name="Hunicke-Smith S."/>
            <person name="Hyman R.W."/>
            <person name="Komp C."/>
            <person name="Lashkari D."/>
            <person name="Lew H."/>
            <person name="Lin D."/>
            <person name="Mosedale D."/>
            <person name="Nakahara K."/>
            <person name="Namath A."/>
            <person name="Oefner P."/>
            <person name="Oh C."/>
            <person name="Petel F.X."/>
            <person name="Roberts D."/>
            <person name="Schramm S."/>
            <person name="Schroeder M."/>
            <person name="Shogren T."/>
            <person name="Shroff N."/>
            <person name="Winant A."/>
            <person name="Yelton M.A."/>
            <person name="Botstein D."/>
            <person name="Davis R.W."/>
            <person name="Johnston M."/>
            <person name="Andrews S."/>
            <person name="Brinkman R."/>
            <person name="Cooper J."/>
            <person name="Ding H."/>
            <person name="Du Z."/>
            <person name="Favello A."/>
            <person name="Fulton L."/>
            <person name="Gattung S."/>
            <person name="Greco T."/>
            <person name="Hallsworth K."/>
            <person name="Hawkins J."/>
            <person name="Hillier L.W."/>
            <person name="Jier M."/>
            <person name="Johnson D."/>
            <person name="Johnston L."/>
            <person name="Kirsten J."/>
            <person name="Kucaba T."/>
            <person name="Langston Y."/>
            <person name="Latreille P."/>
            <person name="Le T."/>
            <person name="Mardis E."/>
            <person name="Menezes S."/>
            <person name="Miller N."/>
            <person name="Nhan M."/>
            <person name="Pauley A."/>
            <person name="Peluso D."/>
            <person name="Rifkin L."/>
            <person name="Riles L."/>
            <person name="Taich A."/>
            <person name="Trevaskis E."/>
            <person name="Vignati D."/>
            <person name="Wilcox L."/>
            <person name="Wohldman P."/>
            <person name="Vaudin M."/>
            <person name="Wilson R."/>
            <person name="Waterston R."/>
            <person name="Albermann K."/>
            <person name="Hani J."/>
            <person name="Heumann K."/>
            <person name="Kleine K."/>
            <person name="Mewes H.-W."/>
            <person name="Zollner A."/>
            <person name="Zaccaria P."/>
        </authorList>
    </citation>
    <scope>NUCLEOTIDE SEQUENCE [LARGE SCALE GENOMIC DNA]</scope>
    <source>
        <strain>ATCC 204508 / S288c</strain>
    </source>
</reference>
<reference key="2">
    <citation type="journal article" date="2014" name="G3 (Bethesda)">
        <title>The reference genome sequence of Saccharomyces cerevisiae: Then and now.</title>
        <authorList>
            <person name="Engel S.R."/>
            <person name="Dietrich F.S."/>
            <person name="Fisk D.G."/>
            <person name="Binkley G."/>
            <person name="Balakrishnan R."/>
            <person name="Costanzo M.C."/>
            <person name="Dwight S.S."/>
            <person name="Hitz B.C."/>
            <person name="Karra K."/>
            <person name="Nash R.S."/>
            <person name="Weng S."/>
            <person name="Wong E.D."/>
            <person name="Lloyd P."/>
            <person name="Skrzypek M.S."/>
            <person name="Miyasato S.R."/>
            <person name="Simison M."/>
            <person name="Cherry J.M."/>
        </authorList>
    </citation>
    <scope>GENOME REANNOTATION</scope>
    <source>
        <strain>ATCC 204508 / S288c</strain>
    </source>
</reference>
<reference key="3">
    <citation type="journal article" date="2007" name="Genome Res.">
        <title>Approaching a complete repository of sequence-verified protein-encoding clones for Saccharomyces cerevisiae.</title>
        <authorList>
            <person name="Hu Y."/>
            <person name="Rolfs A."/>
            <person name="Bhullar B."/>
            <person name="Murthy T.V.S."/>
            <person name="Zhu C."/>
            <person name="Berger M.F."/>
            <person name="Camargo A.A."/>
            <person name="Kelley F."/>
            <person name="McCarron S."/>
            <person name="Jepson D."/>
            <person name="Richardson A."/>
            <person name="Raphael J."/>
            <person name="Moreira D."/>
            <person name="Taycher E."/>
            <person name="Zuo D."/>
            <person name="Mohr S."/>
            <person name="Kane M.F."/>
            <person name="Williamson J."/>
            <person name="Simpson A.J.G."/>
            <person name="Bulyk M.L."/>
            <person name="Harlow E."/>
            <person name="Marsischky G."/>
            <person name="Kolodner R.D."/>
            <person name="LaBaer J."/>
        </authorList>
    </citation>
    <scope>NUCLEOTIDE SEQUENCE [GENOMIC DNA]</scope>
</reference>
<reference key="4">
    <citation type="journal article" date="2002" name="Curr. Biol.">
        <title>Proteomics analysis identifies new components of the fission and budding yeast anaphase-promoting complexes.</title>
        <authorList>
            <person name="Yoon H.-J."/>
            <person name="Feoktistova A."/>
            <person name="Wolfe B.A."/>
            <person name="Jennings J.L."/>
            <person name="Link A.J."/>
            <person name="Gould K.L."/>
        </authorList>
    </citation>
    <scope>SUBUNIT</scope>
</reference>
<reference key="5">
    <citation type="journal article" date="2003" name="J. Biol. Chem.">
        <title>Mnd2 and Swm1 are core subunits of the Saccharomyces cerevisiae anaphase-promoting complex.</title>
        <authorList>
            <person name="Hall M.C."/>
            <person name="Torres M.P."/>
            <person name="Schroeder G.K."/>
            <person name="Borchers C.H."/>
        </authorList>
    </citation>
    <scope>SUBUNIT</scope>
    <scope>INTERACTION WITH APC5 AND CDC23</scope>
</reference>
<reference key="6">
    <citation type="journal article" date="2004" name="Mol. Cell. Biol.">
        <title>Swm1/Apc13 is an evolutionarily conserved subunit of the anaphase-promoting complex stabilizing the association of Cdc16 and Cdc27.</title>
        <authorList>
            <person name="Schwickart M."/>
            <person name="Havlis J."/>
            <person name="Habermann B."/>
            <person name="Bogdanova A."/>
            <person name="Camasses A."/>
            <person name="Oelschlaegel T."/>
            <person name="Shevchenko A."/>
            <person name="Zachariae W."/>
        </authorList>
    </citation>
    <scope>FUNCTION</scope>
    <scope>SUBUNIT</scope>
</reference>
<feature type="chain" id="PRO_0000072352" description="Anaphase-promoting complex subunit SWM1">
    <location>
        <begin position="1"/>
        <end position="170"/>
    </location>
</feature>
<feature type="region of interest" description="Disordered" evidence="1">
    <location>
        <begin position="48"/>
        <end position="81"/>
    </location>
</feature>
<feature type="region of interest" description="Disordered" evidence="1">
    <location>
        <begin position="122"/>
        <end position="141"/>
    </location>
</feature>
<feature type="compositionally biased region" description="Basic and acidic residues" evidence="1">
    <location>
        <begin position="48"/>
        <end position="67"/>
    </location>
</feature>
<feature type="compositionally biased region" description="Basic and acidic residues" evidence="1">
    <location>
        <begin position="132"/>
        <end position="141"/>
    </location>
</feature>
<feature type="turn" evidence="6">
    <location>
        <begin position="13"/>
        <end position="15"/>
    </location>
</feature>
<feature type="helix" evidence="6">
    <location>
        <begin position="19"/>
        <end position="23"/>
    </location>
</feature>
<feature type="helix" evidence="6">
    <location>
        <begin position="27"/>
        <end position="29"/>
    </location>
</feature>
<feature type="helix" evidence="6">
    <location>
        <begin position="39"/>
        <end position="44"/>
    </location>
</feature>
<feature type="helix" evidence="6">
    <location>
        <begin position="79"/>
        <end position="89"/>
    </location>
</feature>
<feature type="helix" evidence="6">
    <location>
        <begin position="94"/>
        <end position="99"/>
    </location>
</feature>
<feature type="strand" evidence="6">
    <location>
        <begin position="109"/>
        <end position="112"/>
    </location>
</feature>
<feature type="helix" evidence="6">
    <location>
        <begin position="149"/>
        <end position="159"/>
    </location>
</feature>
<comment type="function">
    <text evidence="4">Component of the anaphase promoting complex/cyclosome (APC/C), a cell cycle-regulated E3 ubiquitin-protein ligase complex that controls progression through mitosis and the G1 phase of the cell cycle. The APC/C is thought to confer substrate specificity and, in the presence of ubiquitin-conjugating E2 enzymes, it catalyzes the formation of protein-ubiquitin conjugates that are subsequently degraded by the 26S proteasome. In early mitosis, the APC/C is activated by CDC20 and targets securin PDS1, the B-type cyclin CLB5, and other anaphase inhibitory proteins for proteolysis, thereby triggering the separation of sister chromatids at the metaphase-to-anaphase transition. In late mitosis and in G1, degradation of CLB5 allows activation of the APC/C by CDH1, which is needed to destroy CDC20 and the B-type cyclin CLB2 to allow exit from mitosis and creating the low CDK state necessary for cytokinesis and for reforming prereplicative complexes in G1 prior to another round of replication. SWM1 is required for APC/C activity in meiosis.</text>
</comment>
<comment type="pathway">
    <text>Protein modification; protein ubiquitination.</text>
</comment>
<comment type="subunit">
    <text evidence="2 3 4">The APC/C is composed of at least 13 subunits that stay tightly associated throughout the cell cycle: APC1, APC2, APC4, APC5, APC9, APC11, CDC16, CDC23, CDC26, CDC27, DOC1, MND2 and SWM1. SWM1 interacts directly with CDC23 and APC5, and is required to tether APC9, CDC16, CDC26 and CDC27 to the complex.</text>
</comment>
<comment type="interaction">
    <interactant intactId="EBI-33330">
        <id>Q12379</id>
    </interactant>
    <interactant intactId="EBI-32842">
        <id>Q04601</id>
        <label>APC4</label>
    </interactant>
    <organismsDiffer>false</organismsDiffer>
    <experiments>6</experiments>
</comment>
<comment type="interaction">
    <interactant intactId="EBI-33330">
        <id>Q12379</id>
    </interactant>
    <interactant intactId="EBI-35371">
        <id>Q08683</id>
        <label>APC5</label>
    </interactant>
    <organismsDiffer>false</organismsDiffer>
    <experiments>5</experiments>
</comment>
<comment type="interaction">
    <interactant intactId="EBI-33330">
        <id>Q12379</id>
    </interactant>
    <interactant intactId="EBI-4216">
        <id>P16522</id>
        <label>CDC23</label>
    </interactant>
    <organismsDiffer>false</organismsDiffer>
    <experiments>6</experiments>
</comment>
<comment type="interaction">
    <interactant intactId="EBI-33330">
        <id>Q12379</id>
    </interactant>
    <interactant intactId="EBI-25433">
        <id>P40577</id>
        <label>MND2</label>
    </interactant>
    <organismsDiffer>false</organismsDiffer>
    <experiments>5</experiments>
</comment>
<comment type="similarity">
    <text evidence="5">Belongs to the APC13 family.</text>
</comment>